<sequence length="164" mass="18125">MGQKKTMGTERSRGGKRGPQPGAERPEEPGATFSKKPPEGARAPRCLSRPTAPKSGACLARRRPPGSPCSIRDAPFHTGDDRFLARENFPNVLQPLPRMFAVQQAADFESQCPRRWDSRKRPSEGLPSAGWGRWRGRPIHLGLWVSGSVRRKVSGSHVSRSLHL</sequence>
<proteinExistence type="uncertain"/>
<name>YQ037_HUMAN</name>
<protein>
    <recommendedName>
        <fullName>Putative uncharacterized protein FLJ38767</fullName>
    </recommendedName>
</protein>
<comment type="caution">
    <text evidence="2">Product of a dubious CDS prediction.</text>
</comment>
<evidence type="ECO:0000256" key="1">
    <source>
        <dbReference type="SAM" id="MobiDB-lite"/>
    </source>
</evidence>
<evidence type="ECO:0000305" key="2"/>
<feature type="chain" id="PRO_0000342630" description="Putative uncharacterized protein FLJ38767">
    <location>
        <begin position="1"/>
        <end position="164"/>
    </location>
</feature>
<feature type="region of interest" description="Disordered" evidence="1">
    <location>
        <begin position="1"/>
        <end position="77"/>
    </location>
</feature>
<feature type="sequence conflict" description="In Ref. 1; AK096086." evidence="2" ref="1">
    <original>Q</original>
    <variation>R</variation>
    <location>
        <position position="104"/>
    </location>
</feature>
<feature type="sequence conflict" description="In Ref. 1; AK096086." evidence="2" ref="1">
    <original>I</original>
    <variation>T</variation>
    <location>
        <position position="139"/>
    </location>
</feature>
<dbReference type="EMBL" id="AK096086">
    <property type="status" value="NOT_ANNOTATED_CDS"/>
    <property type="molecule type" value="mRNA"/>
</dbReference>
<dbReference type="EMBL" id="AC129492">
    <property type="status" value="NOT_ANNOTATED_CDS"/>
    <property type="molecule type" value="Genomic_DNA"/>
</dbReference>
<dbReference type="EMBL" id="BC046191">
    <property type="status" value="NOT_ANNOTATED_CDS"/>
    <property type="molecule type" value="mRNA"/>
</dbReference>
<dbReference type="GlyGen" id="A8MZ25">
    <property type="glycosylation" value="1 site, 1 O-linked glycan (1 site)"/>
</dbReference>
<dbReference type="BioMuta" id="-"/>
<dbReference type="neXtProt" id="NX_A8MZ25"/>
<dbReference type="InParanoid" id="A8MZ25"/>
<dbReference type="PAN-GO" id="A8MZ25">
    <property type="GO annotations" value="0 GO annotations based on evolutionary models"/>
</dbReference>
<dbReference type="PhylomeDB" id="A8MZ25"/>
<dbReference type="Pharos" id="A8MZ25">
    <property type="development level" value="Tdark"/>
</dbReference>
<dbReference type="Proteomes" id="UP000005640">
    <property type="component" value="Unplaced"/>
</dbReference>
<dbReference type="RNAct" id="A8MZ25">
    <property type="molecule type" value="protein"/>
</dbReference>
<accession>A8MZ25</accession>
<organism>
    <name type="scientific">Homo sapiens</name>
    <name type="common">Human</name>
    <dbReference type="NCBI Taxonomy" id="9606"/>
    <lineage>
        <taxon>Eukaryota</taxon>
        <taxon>Metazoa</taxon>
        <taxon>Chordata</taxon>
        <taxon>Craniata</taxon>
        <taxon>Vertebrata</taxon>
        <taxon>Euteleostomi</taxon>
        <taxon>Mammalia</taxon>
        <taxon>Eutheria</taxon>
        <taxon>Euarchontoglires</taxon>
        <taxon>Primates</taxon>
        <taxon>Haplorrhini</taxon>
        <taxon>Catarrhini</taxon>
        <taxon>Hominidae</taxon>
        <taxon>Homo</taxon>
    </lineage>
</organism>
<reference key="1">
    <citation type="journal article" date="2004" name="Nat. Genet.">
        <title>Complete sequencing and characterization of 21,243 full-length human cDNAs.</title>
        <authorList>
            <person name="Ota T."/>
            <person name="Suzuki Y."/>
            <person name="Nishikawa T."/>
            <person name="Otsuki T."/>
            <person name="Sugiyama T."/>
            <person name="Irie R."/>
            <person name="Wakamatsu A."/>
            <person name="Hayashi K."/>
            <person name="Sato H."/>
            <person name="Nagai K."/>
            <person name="Kimura K."/>
            <person name="Makita H."/>
            <person name="Sekine M."/>
            <person name="Obayashi M."/>
            <person name="Nishi T."/>
            <person name="Shibahara T."/>
            <person name="Tanaka T."/>
            <person name="Ishii S."/>
            <person name="Yamamoto J."/>
            <person name="Saito K."/>
            <person name="Kawai Y."/>
            <person name="Isono Y."/>
            <person name="Nakamura Y."/>
            <person name="Nagahari K."/>
            <person name="Murakami K."/>
            <person name="Yasuda T."/>
            <person name="Iwayanagi T."/>
            <person name="Wagatsuma M."/>
            <person name="Shiratori A."/>
            <person name="Sudo H."/>
            <person name="Hosoiri T."/>
            <person name="Kaku Y."/>
            <person name="Kodaira H."/>
            <person name="Kondo H."/>
            <person name="Sugawara M."/>
            <person name="Takahashi M."/>
            <person name="Kanda K."/>
            <person name="Yokoi T."/>
            <person name="Furuya T."/>
            <person name="Kikkawa E."/>
            <person name="Omura Y."/>
            <person name="Abe K."/>
            <person name="Kamihara K."/>
            <person name="Katsuta N."/>
            <person name="Sato K."/>
            <person name="Tanikawa M."/>
            <person name="Yamazaki M."/>
            <person name="Ninomiya K."/>
            <person name="Ishibashi T."/>
            <person name="Yamashita H."/>
            <person name="Murakawa K."/>
            <person name="Fujimori K."/>
            <person name="Tanai H."/>
            <person name="Kimata M."/>
            <person name="Watanabe M."/>
            <person name="Hiraoka S."/>
            <person name="Chiba Y."/>
            <person name="Ishida S."/>
            <person name="Ono Y."/>
            <person name="Takiguchi S."/>
            <person name="Watanabe S."/>
            <person name="Yosida M."/>
            <person name="Hotuta T."/>
            <person name="Kusano J."/>
            <person name="Kanehori K."/>
            <person name="Takahashi-Fujii A."/>
            <person name="Hara H."/>
            <person name="Tanase T.-O."/>
            <person name="Nomura Y."/>
            <person name="Togiya S."/>
            <person name="Komai F."/>
            <person name="Hara R."/>
            <person name="Takeuchi K."/>
            <person name="Arita M."/>
            <person name="Imose N."/>
            <person name="Musashino K."/>
            <person name="Yuuki H."/>
            <person name="Oshima A."/>
            <person name="Sasaki N."/>
            <person name="Aotsuka S."/>
            <person name="Yoshikawa Y."/>
            <person name="Matsunawa H."/>
            <person name="Ichihara T."/>
            <person name="Shiohata N."/>
            <person name="Sano S."/>
            <person name="Moriya S."/>
            <person name="Momiyama H."/>
            <person name="Satoh N."/>
            <person name="Takami S."/>
            <person name="Terashima Y."/>
            <person name="Suzuki O."/>
            <person name="Nakagawa S."/>
            <person name="Senoh A."/>
            <person name="Mizoguchi H."/>
            <person name="Goto Y."/>
            <person name="Shimizu F."/>
            <person name="Wakebe H."/>
            <person name="Hishigaki H."/>
            <person name="Watanabe T."/>
            <person name="Sugiyama A."/>
            <person name="Takemoto M."/>
            <person name="Kawakami B."/>
            <person name="Yamazaki M."/>
            <person name="Watanabe K."/>
            <person name="Kumagai A."/>
            <person name="Itakura S."/>
            <person name="Fukuzumi Y."/>
            <person name="Fujimori Y."/>
            <person name="Komiyama M."/>
            <person name="Tashiro H."/>
            <person name="Tanigami A."/>
            <person name="Fujiwara T."/>
            <person name="Ono T."/>
            <person name="Yamada K."/>
            <person name="Fujii Y."/>
            <person name="Ozaki K."/>
            <person name="Hirao M."/>
            <person name="Ohmori Y."/>
            <person name="Kawabata A."/>
            <person name="Hikiji T."/>
            <person name="Kobatake N."/>
            <person name="Inagaki H."/>
            <person name="Ikema Y."/>
            <person name="Okamoto S."/>
            <person name="Okitani R."/>
            <person name="Kawakami T."/>
            <person name="Noguchi S."/>
            <person name="Itoh T."/>
            <person name="Shigeta K."/>
            <person name="Senba T."/>
            <person name="Matsumura K."/>
            <person name="Nakajima Y."/>
            <person name="Mizuno T."/>
            <person name="Morinaga M."/>
            <person name="Sasaki M."/>
            <person name="Togashi T."/>
            <person name="Oyama M."/>
            <person name="Hata H."/>
            <person name="Watanabe M."/>
            <person name="Komatsu T."/>
            <person name="Mizushima-Sugano J."/>
            <person name="Satoh T."/>
            <person name="Shirai Y."/>
            <person name="Takahashi Y."/>
            <person name="Nakagawa K."/>
            <person name="Okumura K."/>
            <person name="Nagase T."/>
            <person name="Nomura N."/>
            <person name="Kikuchi H."/>
            <person name="Masuho Y."/>
            <person name="Yamashita R."/>
            <person name="Nakai K."/>
            <person name="Yada T."/>
            <person name="Nakamura Y."/>
            <person name="Ohara O."/>
            <person name="Isogai T."/>
            <person name="Sugano S."/>
        </authorList>
    </citation>
    <scope>NUCLEOTIDE SEQUENCE [LARGE SCALE MRNA]</scope>
    <source>
        <tissue>Kidney</tissue>
    </source>
</reference>
<reference key="2">
    <citation type="journal article" date="2006" name="Nature">
        <title>DNA sequence of human chromosome 17 and analysis of rearrangement in the human lineage.</title>
        <authorList>
            <person name="Zody M.C."/>
            <person name="Garber M."/>
            <person name="Adams D.J."/>
            <person name="Sharpe T."/>
            <person name="Harrow J."/>
            <person name="Lupski J.R."/>
            <person name="Nicholson C."/>
            <person name="Searle S.M."/>
            <person name="Wilming L."/>
            <person name="Young S.K."/>
            <person name="Abouelleil A."/>
            <person name="Allen N.R."/>
            <person name="Bi W."/>
            <person name="Bloom T."/>
            <person name="Borowsky M.L."/>
            <person name="Bugalter B.E."/>
            <person name="Butler J."/>
            <person name="Chang J.L."/>
            <person name="Chen C.-K."/>
            <person name="Cook A."/>
            <person name="Corum B."/>
            <person name="Cuomo C.A."/>
            <person name="de Jong P.J."/>
            <person name="DeCaprio D."/>
            <person name="Dewar K."/>
            <person name="FitzGerald M."/>
            <person name="Gilbert J."/>
            <person name="Gibson R."/>
            <person name="Gnerre S."/>
            <person name="Goldstein S."/>
            <person name="Grafham D.V."/>
            <person name="Grocock R."/>
            <person name="Hafez N."/>
            <person name="Hagopian D.S."/>
            <person name="Hart E."/>
            <person name="Norman C.H."/>
            <person name="Humphray S."/>
            <person name="Jaffe D.B."/>
            <person name="Jones M."/>
            <person name="Kamal M."/>
            <person name="Khodiyar V.K."/>
            <person name="LaButti K."/>
            <person name="Laird G."/>
            <person name="Lehoczky J."/>
            <person name="Liu X."/>
            <person name="Lokyitsang T."/>
            <person name="Loveland J."/>
            <person name="Lui A."/>
            <person name="Macdonald P."/>
            <person name="Major J.E."/>
            <person name="Matthews L."/>
            <person name="Mauceli E."/>
            <person name="McCarroll S.A."/>
            <person name="Mihalev A.H."/>
            <person name="Mudge J."/>
            <person name="Nguyen C."/>
            <person name="Nicol R."/>
            <person name="O'Leary S.B."/>
            <person name="Osoegawa K."/>
            <person name="Schwartz D.C."/>
            <person name="Shaw-Smith C."/>
            <person name="Stankiewicz P."/>
            <person name="Steward C."/>
            <person name="Swarbreck D."/>
            <person name="Venkataraman V."/>
            <person name="Whittaker C.A."/>
            <person name="Yang X."/>
            <person name="Zimmer A.R."/>
            <person name="Bradley A."/>
            <person name="Hubbard T."/>
            <person name="Birren B.W."/>
            <person name="Rogers J."/>
            <person name="Lander E.S."/>
            <person name="Nusbaum C."/>
        </authorList>
    </citation>
    <scope>NUCLEOTIDE SEQUENCE [LARGE SCALE GENOMIC DNA]</scope>
</reference>
<reference key="3">
    <citation type="journal article" date="2004" name="Genome Res.">
        <title>The status, quality, and expansion of the NIH full-length cDNA project: the Mammalian Gene Collection (MGC).</title>
        <authorList>
            <consortium name="The MGC Project Team"/>
        </authorList>
    </citation>
    <scope>NUCLEOTIDE SEQUENCE [LARGE SCALE MRNA]</scope>
    <source>
        <tissue>Lymphoma</tissue>
    </source>
</reference>
<keyword id="KW-1185">Reference proteome</keyword>